<comment type="function">
    <text evidence="1">Serine/threonine protein kinase involved in the cytoplasm to vacuole transport (Cvt) and found to be essential in autophagy, where it is required for the formation of autophagosomes (By similarity). Involved in the clearance of protein aggregates which cannot be efficiently cleared by the proteasome (By similarity). Required for selective autophagic degradation of the nucleus (nucleophagy) as well as for mitophagy which contributes to regulate mitochondrial quantity and quality by eliminating the mitochondria to a basal level to fulfill cellular energy requirements and preventing excess ROS production (By similarity). Also involved in endoplasmic reticulum-specific autophagic process, in selective removal of ER-associated degradation (ERAD) substrates (By similarity). Plays a key role in ATG9 and ATG23 cycling through the pre-autophagosomal structure and is necessary to promote ATG18 binding to ATG9 through phosphorylation of ATG9. Catalyzes phosphorylation of ATG4, decreasing the interaction between ATG4 and ATG8 and impairing deconjugation of PE-conjugated forms of ATG8 (By similarity).</text>
</comment>
<comment type="catalytic activity">
    <reaction evidence="1">
        <text>L-seryl-[protein] + ATP = O-phospho-L-seryl-[protein] + ADP + H(+)</text>
        <dbReference type="Rhea" id="RHEA:17989"/>
        <dbReference type="Rhea" id="RHEA-COMP:9863"/>
        <dbReference type="Rhea" id="RHEA-COMP:11604"/>
        <dbReference type="ChEBI" id="CHEBI:15378"/>
        <dbReference type="ChEBI" id="CHEBI:29999"/>
        <dbReference type="ChEBI" id="CHEBI:30616"/>
        <dbReference type="ChEBI" id="CHEBI:83421"/>
        <dbReference type="ChEBI" id="CHEBI:456216"/>
        <dbReference type="EC" id="2.7.11.1"/>
    </reaction>
</comment>
<comment type="catalytic activity">
    <reaction evidence="1">
        <text>L-threonyl-[protein] + ATP = O-phospho-L-threonyl-[protein] + ADP + H(+)</text>
        <dbReference type="Rhea" id="RHEA:46608"/>
        <dbReference type="Rhea" id="RHEA-COMP:11060"/>
        <dbReference type="Rhea" id="RHEA-COMP:11605"/>
        <dbReference type="ChEBI" id="CHEBI:15378"/>
        <dbReference type="ChEBI" id="CHEBI:30013"/>
        <dbReference type="ChEBI" id="CHEBI:30616"/>
        <dbReference type="ChEBI" id="CHEBI:61977"/>
        <dbReference type="ChEBI" id="CHEBI:456216"/>
        <dbReference type="EC" id="2.7.11.1"/>
    </reaction>
</comment>
<comment type="subunit">
    <text evidence="1 4">Homodimer (By similarity). Dimerization requires the presence of ATG13 (By similarity). Forms a ternary complex with ATG13 and ATG17 (PubMed:24793651).</text>
</comment>
<comment type="interaction">
    <interactant intactId="EBI-16104970">
        <id>W0T9X4</id>
    </interactant>
    <interactant intactId="EBI-16104996">
        <id>W0TA43</id>
        <label>ATG13</label>
    </interactant>
    <organismsDiffer>false</organismsDiffer>
    <experiments>3</experiments>
</comment>
<comment type="subcellular location">
    <subcellularLocation>
        <location evidence="1">Cytoplasm</location>
    </subcellularLocation>
    <subcellularLocation>
        <location evidence="1">Preautophagosomal structure membrane</location>
        <topology evidence="1">Peripheral membrane protein</topology>
    </subcellularLocation>
</comment>
<comment type="domain">
    <text evidence="1">The LIR motif is required for the interaction with ATG8 and for the association of ATG1 with autophagosomes (By similarity).</text>
</comment>
<comment type="domain">
    <text evidence="4">The C-terminal region of ATG1 responsible for ATG13-binding comprises six alpha-helices which fold into two antiparallel three-helix bundles resembling each other (PubMed:24793651).</text>
</comment>
<comment type="disruption phenotype">
    <text evidence="5">Still forms preautophagosomal structures (PAS) in proximity to the vacuolar membrane (PubMed:26442587).</text>
</comment>
<comment type="miscellaneous">
    <text evidence="5">Kluyveromyces marxianus proteins are shorter in length and have a more ordered secondary structure than their S.cerevisiae counterparts, which might contribute to the superior thermotolerance and solubility (PubMed:26442587). K.marxianus could be therefore useful as a new model organism for further elucidation of the molecular details of autophagy (PubMed:26442587).</text>
</comment>
<comment type="similarity">
    <text evidence="7">Belongs to the protein kinase superfamily. Ser/Thr protein kinase family. APG1/unc-51/ULK1 subfamily.</text>
</comment>
<dbReference type="EC" id="2.7.11.1" evidence="1"/>
<dbReference type="EMBL" id="AP012215">
    <property type="protein sequence ID" value="BAO39616.1"/>
    <property type="molecule type" value="Genomic_DNA"/>
</dbReference>
<dbReference type="RefSeq" id="XP_022675452.1">
    <property type="nucleotide sequence ID" value="XM_022818824.1"/>
</dbReference>
<dbReference type="PDB" id="4P1N">
    <property type="method" value="X-ray"/>
    <property type="resolution" value="2.20 A"/>
    <property type="chains" value="A/B=564-836"/>
</dbReference>
<dbReference type="PDBsum" id="4P1N"/>
<dbReference type="SMR" id="W0T9X4"/>
<dbReference type="DIP" id="DIP-60843N"/>
<dbReference type="IntAct" id="W0T9X4">
    <property type="interactions" value="1"/>
</dbReference>
<dbReference type="GeneID" id="34715597"/>
<dbReference type="VEuPathDB" id="FungiDB:KLMA_30321"/>
<dbReference type="OrthoDB" id="346907at2759"/>
<dbReference type="EvolutionaryTrace" id="W0T9X4"/>
<dbReference type="Proteomes" id="UP000065495">
    <property type="component" value="Chromosome 3"/>
</dbReference>
<dbReference type="GO" id="GO:0005776">
    <property type="term" value="C:autophagosome"/>
    <property type="evidence" value="ECO:0007669"/>
    <property type="project" value="TreeGrafter"/>
</dbReference>
<dbReference type="GO" id="GO:0005829">
    <property type="term" value="C:cytosol"/>
    <property type="evidence" value="ECO:0007669"/>
    <property type="project" value="TreeGrafter"/>
</dbReference>
<dbReference type="GO" id="GO:0034045">
    <property type="term" value="C:phagophore assembly site membrane"/>
    <property type="evidence" value="ECO:0007669"/>
    <property type="project" value="UniProtKB-SubCell"/>
</dbReference>
<dbReference type="GO" id="GO:0005524">
    <property type="term" value="F:ATP binding"/>
    <property type="evidence" value="ECO:0007669"/>
    <property type="project" value="UniProtKB-KW"/>
</dbReference>
<dbReference type="GO" id="GO:0106310">
    <property type="term" value="F:protein serine kinase activity"/>
    <property type="evidence" value="ECO:0007669"/>
    <property type="project" value="RHEA"/>
</dbReference>
<dbReference type="GO" id="GO:0004674">
    <property type="term" value="F:protein serine/threonine kinase activity"/>
    <property type="evidence" value="ECO:0007669"/>
    <property type="project" value="UniProtKB-EC"/>
</dbReference>
<dbReference type="GO" id="GO:0000045">
    <property type="term" value="P:autophagosome assembly"/>
    <property type="evidence" value="ECO:0007669"/>
    <property type="project" value="TreeGrafter"/>
</dbReference>
<dbReference type="GO" id="GO:0000422">
    <property type="term" value="P:autophagy of mitochondrion"/>
    <property type="evidence" value="ECO:0007669"/>
    <property type="project" value="TreeGrafter"/>
</dbReference>
<dbReference type="GO" id="GO:0034727">
    <property type="term" value="P:piecemeal microautophagy of the nucleus"/>
    <property type="evidence" value="ECO:0007669"/>
    <property type="project" value="TreeGrafter"/>
</dbReference>
<dbReference type="GO" id="GO:0015031">
    <property type="term" value="P:protein transport"/>
    <property type="evidence" value="ECO:0007669"/>
    <property type="project" value="UniProtKB-KW"/>
</dbReference>
<dbReference type="GO" id="GO:0010506">
    <property type="term" value="P:regulation of autophagy"/>
    <property type="evidence" value="ECO:0007669"/>
    <property type="project" value="InterPro"/>
</dbReference>
<dbReference type="GO" id="GO:0042594">
    <property type="term" value="P:response to starvation"/>
    <property type="evidence" value="ECO:0007669"/>
    <property type="project" value="TreeGrafter"/>
</dbReference>
<dbReference type="GO" id="GO:0061709">
    <property type="term" value="P:reticulophagy"/>
    <property type="evidence" value="ECO:0007669"/>
    <property type="project" value="TreeGrafter"/>
</dbReference>
<dbReference type="CDD" id="cd14009">
    <property type="entry name" value="STKc_ATG1_ULK_like"/>
    <property type="match status" value="1"/>
</dbReference>
<dbReference type="FunFam" id="3.30.200.20:FF:000042">
    <property type="entry name" value="Aurora kinase A"/>
    <property type="match status" value="1"/>
</dbReference>
<dbReference type="FunFam" id="1.10.510.10:FF:000817">
    <property type="entry name" value="Serine/threonine-protein kinase ATG1"/>
    <property type="match status" value="1"/>
</dbReference>
<dbReference type="Gene3D" id="1.10.510.10">
    <property type="entry name" value="Transferase(Phosphotransferase) domain 1"/>
    <property type="match status" value="1"/>
</dbReference>
<dbReference type="InterPro" id="IPR045269">
    <property type="entry name" value="Atg1-like"/>
</dbReference>
<dbReference type="InterPro" id="IPR048941">
    <property type="entry name" value="ATG1-like_MIT2"/>
</dbReference>
<dbReference type="InterPro" id="IPR022708">
    <property type="entry name" value="Atg1-like_tMIT"/>
</dbReference>
<dbReference type="InterPro" id="IPR011009">
    <property type="entry name" value="Kinase-like_dom_sf"/>
</dbReference>
<dbReference type="InterPro" id="IPR000719">
    <property type="entry name" value="Prot_kinase_dom"/>
</dbReference>
<dbReference type="InterPro" id="IPR017441">
    <property type="entry name" value="Protein_kinase_ATP_BS"/>
</dbReference>
<dbReference type="InterPro" id="IPR008271">
    <property type="entry name" value="Ser/Thr_kinase_AS"/>
</dbReference>
<dbReference type="PANTHER" id="PTHR24348:SF22">
    <property type="entry name" value="NON-SPECIFIC SERINE_THREONINE PROTEIN KINASE"/>
    <property type="match status" value="1"/>
</dbReference>
<dbReference type="PANTHER" id="PTHR24348">
    <property type="entry name" value="SERINE/THREONINE-PROTEIN KINASE UNC-51-RELATED"/>
    <property type="match status" value="1"/>
</dbReference>
<dbReference type="Pfam" id="PF12063">
    <property type="entry name" value="ATG1-like_MIT1"/>
    <property type="match status" value="1"/>
</dbReference>
<dbReference type="Pfam" id="PF21127">
    <property type="entry name" value="ATG1-like_MIT2"/>
    <property type="match status" value="1"/>
</dbReference>
<dbReference type="Pfam" id="PF00069">
    <property type="entry name" value="Pkinase"/>
    <property type="match status" value="1"/>
</dbReference>
<dbReference type="SMART" id="SM00220">
    <property type="entry name" value="S_TKc"/>
    <property type="match status" value="1"/>
</dbReference>
<dbReference type="SUPFAM" id="SSF56112">
    <property type="entry name" value="Protein kinase-like (PK-like)"/>
    <property type="match status" value="1"/>
</dbReference>
<dbReference type="PROSITE" id="PS00107">
    <property type="entry name" value="PROTEIN_KINASE_ATP"/>
    <property type="match status" value="1"/>
</dbReference>
<dbReference type="PROSITE" id="PS50011">
    <property type="entry name" value="PROTEIN_KINASE_DOM"/>
    <property type="match status" value="1"/>
</dbReference>
<dbReference type="PROSITE" id="PS00108">
    <property type="entry name" value="PROTEIN_KINASE_ST"/>
    <property type="match status" value="1"/>
</dbReference>
<organism>
    <name type="scientific">Kluyveromyces marxianus (strain DMKU3-1042 / BCC 29191 / NBRC 104275)</name>
    <name type="common">Yeast</name>
    <name type="synonym">Candida kefyr</name>
    <dbReference type="NCBI Taxonomy" id="1003335"/>
    <lineage>
        <taxon>Eukaryota</taxon>
        <taxon>Fungi</taxon>
        <taxon>Dikarya</taxon>
        <taxon>Ascomycota</taxon>
        <taxon>Saccharomycotina</taxon>
        <taxon>Saccharomycetes</taxon>
        <taxon>Saccharomycetales</taxon>
        <taxon>Saccharomycetaceae</taxon>
        <taxon>Kluyveromyces</taxon>
    </lineage>
</organism>
<name>ATG1_KLUMD</name>
<reference key="1">
    <citation type="journal article" date="2015" name="Biotechnol. Biofuels">
        <title>Genetic basis of the highly efficient yeast Kluyveromyces marxianus: complete genome sequence and transcriptome analyses.</title>
        <authorList>
            <person name="Lertwattanasakul N."/>
            <person name="Kosaka T."/>
            <person name="Hosoyama A."/>
            <person name="Suzuki Y."/>
            <person name="Rodrussamee N."/>
            <person name="Matsutani M."/>
            <person name="Murata M."/>
            <person name="Fujimoto N."/>
            <person name="Suprayogi X."/>
            <person name="Tsuchikane K."/>
            <person name="Limtong S."/>
            <person name="Fujita N."/>
            <person name="Yamada M."/>
        </authorList>
    </citation>
    <scope>NUCLEOTIDE SEQUENCE [LARGE SCALE GENOMIC DNA]</scope>
    <source>
        <strain>DMKU3-1042 / BCC 29191 / NBRC 104275</strain>
    </source>
</reference>
<reference key="2">
    <citation type="journal article" date="2015" name="J. Biol. Chem.">
        <title>The thermotolerant yeast Kluyveromyces marxianus is a useful organism for structural and biochemical studies of autophagy.</title>
        <authorList>
            <person name="Yamamoto H."/>
            <person name="Shima T."/>
            <person name="Yamaguchi M."/>
            <person name="Mochizuki Y."/>
            <person name="Hoshida H."/>
            <person name="Kakuta S."/>
            <person name="Kondo-Kakuta C."/>
            <person name="Noda N.N."/>
            <person name="Inagaki F."/>
            <person name="Itoh T."/>
            <person name="Akada R."/>
            <person name="Ohsumi Y."/>
        </authorList>
    </citation>
    <scope>IDENTIFICATION</scope>
    <scope>DISRUPTION PHENOTYPE</scope>
</reference>
<reference evidence="8" key="3">
    <citation type="journal article" date="2014" name="Nat. Struct. Mol. Biol.">
        <title>Structural basis of starvation-induced assembly of the autophagy initiation complex.</title>
        <authorList>
            <person name="Fujioka Y."/>
            <person name="Suzuki S.W."/>
            <person name="Yamamoto H."/>
            <person name="Kondo-Kakuta C."/>
            <person name="Kimura Y."/>
            <person name="Hirano H."/>
            <person name="Akada R."/>
            <person name="Inagaki F."/>
            <person name="Ohsumi Y."/>
            <person name="Noda N.N."/>
        </authorList>
    </citation>
    <scope>X-RAY CRYSTALLOGRAPHY (2.20 ANGSTROMS) OF 566-836 IN COMPLEX WITH ATG13</scope>
    <scope>DOMAIN</scope>
    <scope>IDENTIFICATION IN THE ATG11-ATG13-ATG17 COMPLEX</scope>
</reference>
<accession>W0T9X4</accession>
<sequence>MSSESHGKAVAKAIRLPTENYTVEKEIGKGSFAIVYKGVSLRDGRNIAIKAVSRSKLKNKKLLENLEVEIAILKKIKHPHIVGLIDCERTSTDFYLIMEYCALGDLTFFIKKRRSLVMKHPLIKTVFDLYPPPSAEHNGLNRVLVVNYLQQLSSALKFLRSKNLVHRDIKPQNLLLCTPLQDYSDPKTFHEMGFIGIYNLPVLKIADFGFARFLPNTSLAETLCGSPLYMAPEILNYQKYNAKADLWSVGTVLYEMCCGRPPFKASNHLELFQKIKKANDEVTVPSNCYIEPKIFKLIKGLLTFDPEARMGFNEFFNNEVVTEDLSRYEASYEPDLESKSKDVAESNMFVSEYLVRPAAQEKANGGLRTDEGSAMPGAEHTYNKEREHYRERQDLQGQQQQQQQHPDSPPRGSTQGYQSSAGQTRMKSSYNDLILEKEYVVVEKKTVEVNSLADDFANNGPTTNNQGAQIIKPLRYRTSSSSDGHGGRRASLVERRLSISSLSPSNALSKALGLASVRLFGYQQPNTQTTSTSTHPTLLNPQIFHELTENAVLRADHHLNLFNEQISDSNITPFVESLSAKAFVMYSFAEMKFSQILPSPPSSTDYYSQSDKRLSNGSCAIDDDDDLDSGNPSSNQTLTPGANKVSAANVDNLIPAPELKKLCMESLLLYLKSLTILASSMKLTSKWWYENESKNCTLKLNILVQWIRDRFNECLDKAEFLRLKLHTLNQSEDPQVLDDEPTIFVEKLIYDRALDISRNAARLEMEGGNYNTCELAYATSLWMLEILLDEHLSSNEVYDDGYSSNITSLDESDKEMIRKYVSSIANRLKALKSKMS</sequence>
<protein>
    <recommendedName>
        <fullName evidence="7">Serine/threonine-protein kinase ATG1</fullName>
        <ecNumber evidence="1">2.7.11.1</ecNumber>
    </recommendedName>
    <alternativeName>
        <fullName evidence="6">Autophagy-related protein 1</fullName>
    </alternativeName>
</protein>
<proteinExistence type="evidence at protein level"/>
<evidence type="ECO:0000250" key="1">
    <source>
        <dbReference type="UniProtKB" id="P53104"/>
    </source>
</evidence>
<evidence type="ECO:0000255" key="2">
    <source>
        <dbReference type="PROSITE-ProRule" id="PRU00159"/>
    </source>
</evidence>
<evidence type="ECO:0000256" key="3">
    <source>
        <dbReference type="SAM" id="MobiDB-lite"/>
    </source>
</evidence>
<evidence type="ECO:0000269" key="4">
    <source>
    </source>
</evidence>
<evidence type="ECO:0000269" key="5">
    <source>
    </source>
</evidence>
<evidence type="ECO:0000303" key="6">
    <source>
    </source>
</evidence>
<evidence type="ECO:0000305" key="7"/>
<evidence type="ECO:0007744" key="8">
    <source>
        <dbReference type="PDB" id="4P1N"/>
    </source>
</evidence>
<evidence type="ECO:0007829" key="9">
    <source>
        <dbReference type="PDB" id="4P1N"/>
    </source>
</evidence>
<feature type="chain" id="PRO_0000443864" description="Serine/threonine-protein kinase ATG1">
    <location>
        <begin position="1"/>
        <end position="836"/>
    </location>
</feature>
<feature type="domain" description="Protein kinase" evidence="2">
    <location>
        <begin position="21"/>
        <end position="321"/>
    </location>
</feature>
<feature type="region of interest" description="Disordered" evidence="3">
    <location>
        <begin position="387"/>
        <end position="425"/>
    </location>
</feature>
<feature type="region of interest" description="Disordered" evidence="3">
    <location>
        <begin position="458"/>
        <end position="489"/>
    </location>
</feature>
<feature type="region of interest" description="Interaction with ATG13" evidence="4">
    <location>
        <begin position="571"/>
        <end position="836"/>
    </location>
</feature>
<feature type="region of interest" description="Disordered" evidence="3">
    <location>
        <begin position="619"/>
        <end position="642"/>
    </location>
</feature>
<feature type="compositionally biased region" description="Low complexity" evidence="3">
    <location>
        <begin position="395"/>
        <end position="404"/>
    </location>
</feature>
<feature type="compositionally biased region" description="Polar residues" evidence="3">
    <location>
        <begin position="411"/>
        <end position="425"/>
    </location>
</feature>
<feature type="compositionally biased region" description="Polar residues" evidence="3">
    <location>
        <begin position="459"/>
        <end position="468"/>
    </location>
</feature>
<feature type="compositionally biased region" description="Polar residues" evidence="3">
    <location>
        <begin position="630"/>
        <end position="640"/>
    </location>
</feature>
<feature type="active site" description="Proton acceptor" evidence="2">
    <location>
        <position position="168"/>
    </location>
</feature>
<feature type="binding site" evidence="2">
    <location>
        <begin position="27"/>
        <end position="35"/>
    </location>
    <ligand>
        <name>ATP</name>
        <dbReference type="ChEBI" id="CHEBI:30616"/>
    </ligand>
</feature>
<feature type="binding site" evidence="2">
    <location>
        <position position="50"/>
    </location>
    <ligand>
        <name>ATP</name>
        <dbReference type="ChEBI" id="CHEBI:30616"/>
    </ligand>
</feature>
<feature type="helix" evidence="9">
    <location>
        <begin position="572"/>
        <end position="596"/>
    </location>
</feature>
<feature type="helix" evidence="9">
    <location>
        <begin position="656"/>
        <end position="690"/>
    </location>
</feature>
<feature type="helix" evidence="9">
    <location>
        <begin position="698"/>
        <end position="729"/>
    </location>
</feature>
<feature type="helix" evidence="9">
    <location>
        <begin position="745"/>
        <end position="766"/>
    </location>
</feature>
<feature type="helix" evidence="9">
    <location>
        <begin position="770"/>
        <end position="788"/>
    </location>
</feature>
<feature type="strand" evidence="9">
    <location>
        <begin position="794"/>
        <end position="799"/>
    </location>
</feature>
<feature type="strand" evidence="9">
    <location>
        <begin position="801"/>
        <end position="803"/>
    </location>
</feature>
<feature type="helix" evidence="9">
    <location>
        <begin position="811"/>
        <end position="827"/>
    </location>
</feature>
<feature type="helix" evidence="9">
    <location>
        <begin position="829"/>
        <end position="834"/>
    </location>
</feature>
<keyword id="KW-0002">3D-structure</keyword>
<keyword id="KW-0067">ATP-binding</keyword>
<keyword id="KW-0072">Autophagy</keyword>
<keyword id="KW-0963">Cytoplasm</keyword>
<keyword id="KW-0418">Kinase</keyword>
<keyword id="KW-0472">Membrane</keyword>
<keyword id="KW-0547">Nucleotide-binding</keyword>
<keyword id="KW-0653">Protein transport</keyword>
<keyword id="KW-0808">Transferase</keyword>
<keyword id="KW-0813">Transport</keyword>
<gene>
    <name evidence="6" type="primary">ATG1</name>
    <name type="ORF">KLMA_30321</name>
</gene>